<protein>
    <recommendedName>
        <fullName evidence="1">Small ribosomal subunit protein uS19</fullName>
    </recommendedName>
    <alternativeName>
        <fullName evidence="3">30S ribosomal protein S19</fullName>
    </alternativeName>
</protein>
<dbReference type="EMBL" id="CP000359">
    <property type="protein sequence ID" value="ABF46158.1"/>
    <property type="molecule type" value="Genomic_DNA"/>
</dbReference>
<dbReference type="RefSeq" id="WP_011530988.1">
    <property type="nucleotide sequence ID" value="NC_008025.1"/>
</dbReference>
<dbReference type="SMR" id="Q1IX76"/>
<dbReference type="STRING" id="319795.Dgeo_1863"/>
<dbReference type="KEGG" id="dge:Dgeo_1863"/>
<dbReference type="eggNOG" id="COG0185">
    <property type="taxonomic scope" value="Bacteria"/>
</dbReference>
<dbReference type="HOGENOM" id="CLU_144911_0_1_0"/>
<dbReference type="Proteomes" id="UP000002431">
    <property type="component" value="Chromosome"/>
</dbReference>
<dbReference type="GO" id="GO:0005737">
    <property type="term" value="C:cytoplasm"/>
    <property type="evidence" value="ECO:0007669"/>
    <property type="project" value="UniProtKB-ARBA"/>
</dbReference>
<dbReference type="GO" id="GO:0015935">
    <property type="term" value="C:small ribosomal subunit"/>
    <property type="evidence" value="ECO:0007669"/>
    <property type="project" value="InterPro"/>
</dbReference>
<dbReference type="GO" id="GO:0019843">
    <property type="term" value="F:rRNA binding"/>
    <property type="evidence" value="ECO:0007669"/>
    <property type="project" value="UniProtKB-UniRule"/>
</dbReference>
<dbReference type="GO" id="GO:0003735">
    <property type="term" value="F:structural constituent of ribosome"/>
    <property type="evidence" value="ECO:0007669"/>
    <property type="project" value="InterPro"/>
</dbReference>
<dbReference type="GO" id="GO:0000028">
    <property type="term" value="P:ribosomal small subunit assembly"/>
    <property type="evidence" value="ECO:0007669"/>
    <property type="project" value="TreeGrafter"/>
</dbReference>
<dbReference type="GO" id="GO:0006412">
    <property type="term" value="P:translation"/>
    <property type="evidence" value="ECO:0007669"/>
    <property type="project" value="UniProtKB-UniRule"/>
</dbReference>
<dbReference type="FunFam" id="3.30.860.10:FF:000001">
    <property type="entry name" value="30S ribosomal protein S19"/>
    <property type="match status" value="1"/>
</dbReference>
<dbReference type="Gene3D" id="3.30.860.10">
    <property type="entry name" value="30s Ribosomal Protein S19, Chain A"/>
    <property type="match status" value="1"/>
</dbReference>
<dbReference type="HAMAP" id="MF_00531">
    <property type="entry name" value="Ribosomal_uS19"/>
    <property type="match status" value="1"/>
</dbReference>
<dbReference type="InterPro" id="IPR002222">
    <property type="entry name" value="Ribosomal_uS19"/>
</dbReference>
<dbReference type="InterPro" id="IPR005732">
    <property type="entry name" value="Ribosomal_uS19_bac-type"/>
</dbReference>
<dbReference type="InterPro" id="IPR020934">
    <property type="entry name" value="Ribosomal_uS19_CS"/>
</dbReference>
<dbReference type="InterPro" id="IPR023575">
    <property type="entry name" value="Ribosomal_uS19_SF"/>
</dbReference>
<dbReference type="NCBIfam" id="TIGR01050">
    <property type="entry name" value="rpsS_bact"/>
    <property type="match status" value="1"/>
</dbReference>
<dbReference type="PANTHER" id="PTHR11880">
    <property type="entry name" value="RIBOSOMAL PROTEIN S19P FAMILY MEMBER"/>
    <property type="match status" value="1"/>
</dbReference>
<dbReference type="PANTHER" id="PTHR11880:SF8">
    <property type="entry name" value="SMALL RIBOSOMAL SUBUNIT PROTEIN US19M"/>
    <property type="match status" value="1"/>
</dbReference>
<dbReference type="Pfam" id="PF00203">
    <property type="entry name" value="Ribosomal_S19"/>
    <property type="match status" value="1"/>
</dbReference>
<dbReference type="PIRSF" id="PIRSF002144">
    <property type="entry name" value="Ribosomal_S19"/>
    <property type="match status" value="1"/>
</dbReference>
<dbReference type="PRINTS" id="PR00975">
    <property type="entry name" value="RIBOSOMALS19"/>
</dbReference>
<dbReference type="SUPFAM" id="SSF54570">
    <property type="entry name" value="Ribosomal protein S19"/>
    <property type="match status" value="1"/>
</dbReference>
<dbReference type="PROSITE" id="PS00323">
    <property type="entry name" value="RIBOSOMAL_S19"/>
    <property type="match status" value="1"/>
</dbReference>
<gene>
    <name evidence="1" type="primary">rpsS</name>
    <name type="ordered locus">Dgeo_1863</name>
</gene>
<reference key="1">
    <citation type="submission" date="2006-04" db="EMBL/GenBank/DDBJ databases">
        <title>Complete sequence of chromosome of Deinococcus geothermalis DSM 11300.</title>
        <authorList>
            <person name="Copeland A."/>
            <person name="Lucas S."/>
            <person name="Lapidus A."/>
            <person name="Barry K."/>
            <person name="Detter J.C."/>
            <person name="Glavina del Rio T."/>
            <person name="Hammon N."/>
            <person name="Israni S."/>
            <person name="Dalin E."/>
            <person name="Tice H."/>
            <person name="Pitluck S."/>
            <person name="Brettin T."/>
            <person name="Bruce D."/>
            <person name="Han C."/>
            <person name="Tapia R."/>
            <person name="Saunders E."/>
            <person name="Gilna P."/>
            <person name="Schmutz J."/>
            <person name="Larimer F."/>
            <person name="Land M."/>
            <person name="Hauser L."/>
            <person name="Kyrpides N."/>
            <person name="Kim E."/>
            <person name="Daly M.J."/>
            <person name="Fredrickson J.K."/>
            <person name="Makarova K.S."/>
            <person name="Gaidamakova E.K."/>
            <person name="Zhai M."/>
            <person name="Richardson P."/>
        </authorList>
    </citation>
    <scope>NUCLEOTIDE SEQUENCE [LARGE SCALE GENOMIC DNA]</scope>
    <source>
        <strain>DSM 11300 / CIP 105573 / AG-3a</strain>
    </source>
</reference>
<evidence type="ECO:0000255" key="1">
    <source>
        <dbReference type="HAMAP-Rule" id="MF_00531"/>
    </source>
</evidence>
<evidence type="ECO:0000256" key="2">
    <source>
        <dbReference type="SAM" id="MobiDB-lite"/>
    </source>
</evidence>
<evidence type="ECO:0000305" key="3"/>
<proteinExistence type="inferred from homology"/>
<feature type="chain" id="PRO_0000265356" description="Small ribosomal subunit protein uS19">
    <location>
        <begin position="1"/>
        <end position="95"/>
    </location>
</feature>
<feature type="region of interest" description="Disordered" evidence="2">
    <location>
        <begin position="73"/>
        <end position="95"/>
    </location>
</feature>
<accession>Q1IX76</accession>
<comment type="function">
    <text evidence="1">Protein S19 forms a complex with S13 that binds strongly to the 16S ribosomal RNA.</text>
</comment>
<comment type="similarity">
    <text evidence="1">Belongs to the universal ribosomal protein uS19 family.</text>
</comment>
<keyword id="KW-0687">Ribonucleoprotein</keyword>
<keyword id="KW-0689">Ribosomal protein</keyword>
<keyword id="KW-0694">RNA-binding</keyword>
<keyword id="KW-0699">rRNA-binding</keyword>
<sequence>MPRSLKKGPFVDDHLLKKVDAQNERREKRVIKTWSRRSTIVPEMIGHTIAVHNGKQHVPVFINEQMIGHKLGEFSPTRTYRGHGADKNAKGSKKK</sequence>
<name>RS19_DEIGD</name>
<organism>
    <name type="scientific">Deinococcus geothermalis (strain DSM 11300 / CIP 105573 / AG-3a)</name>
    <dbReference type="NCBI Taxonomy" id="319795"/>
    <lineage>
        <taxon>Bacteria</taxon>
        <taxon>Thermotogati</taxon>
        <taxon>Deinococcota</taxon>
        <taxon>Deinococci</taxon>
        <taxon>Deinococcales</taxon>
        <taxon>Deinococcaceae</taxon>
        <taxon>Deinococcus</taxon>
    </lineage>
</organism>